<accession>Q9RBG5</accession>
<gene>
    <name evidence="5" type="primary">absAa</name>
</gene>
<keyword id="KW-0001">2Fe-2S</keyword>
<keyword id="KW-0223">Dioxygenase</keyword>
<keyword id="KW-0903">Direct protein sequencing</keyword>
<keyword id="KW-0408">Iron</keyword>
<keyword id="KW-0411">Iron-sulfur</keyword>
<keyword id="KW-0479">Metal-binding</keyword>
<keyword id="KW-0520">NAD</keyword>
<keyword id="KW-0560">Oxidoreductase</keyword>
<keyword id="KW-0614">Plasmid</keyword>
<geneLocation type="plasmid" evidence="7">
    <name>pSAH</name>
</geneLocation>
<organism>
    <name type="scientific">Alcaligenes sp</name>
    <dbReference type="NCBI Taxonomy" id="512"/>
    <lineage>
        <taxon>Bacteria</taxon>
        <taxon>Pseudomonadati</taxon>
        <taxon>Pseudomonadota</taxon>
        <taxon>Betaproteobacteria</taxon>
        <taxon>Burkholderiales</taxon>
        <taxon>Alcaligenaceae</taxon>
        <taxon>Alcaligenes</taxon>
    </lineage>
</organism>
<proteinExistence type="evidence at protein level"/>
<sequence>MSRSAAEFLKPQNVASTHYLDNRVYWDHEIFEEEKKRIFSKVWKFVCHVSEIPSTFDYRTIKVADTPLVVIRGKDEKVRTFVNACSHRGIQIVRRPRGNAKTMECIFHRWNYDSTNGELTGAPRKEAYGPSNFDLKQCGLREVRTETYLGLVFVNLDDSAVSLSEFIGDALEMEKDILGAEELEVFDYYEQVLDTNWKNWQETNLDLYHEFMHFANRKTGLTVKEYYQRAWKLYPNGHAAIERYRAQYSNYAGWQDRDDGIRLPGLHPNEFQLVNLFPDLAINARGTVIRIDSQTPISPGKTLVQYRGLGLKRDSERERVQRVRDYTSIWGPFGTNLAEDTLATSLHAKTIQTGSVPFTYLTRDEGGMTQDDLGLRTFYREWERLMSRQANQIR</sequence>
<comment type="function">
    <text evidence="3 4">Alpha subunit of the oxygenase component of the 2-aminobenzenesulfonate 2,3-dioxygenase system (deaminating) (ABSDOS). Can use 2-aminobenzenesulfonate (ABS), benzenesulfonate (BS), 4-toluenesulfonate (TS), 2-nitrobenzenesulfonate, 3- and 4-aminobenzenesulfonates, 4-chloro- and 4-hydroxybenzenesulfonates and pyridine-3-sulfonate as substrates. No desulfonation of ABS to aminocatechol or aminophenol detected.</text>
</comment>
<comment type="catalytic activity">
    <reaction evidence="3">
        <text>2-aminobenzenesulfonate + NADH + O2 + 2 H(+) = 2,3-dihydroxybenzenesulfonate + NH4(+) + NAD(+)</text>
        <dbReference type="Rhea" id="RHEA:23468"/>
        <dbReference type="ChEBI" id="CHEBI:15378"/>
        <dbReference type="ChEBI" id="CHEBI:15379"/>
        <dbReference type="ChEBI" id="CHEBI:15942"/>
        <dbReference type="ChEBI" id="CHEBI:28938"/>
        <dbReference type="ChEBI" id="CHEBI:33565"/>
        <dbReference type="ChEBI" id="CHEBI:57540"/>
        <dbReference type="ChEBI" id="CHEBI:57945"/>
        <dbReference type="EC" id="1.14.12.14"/>
    </reaction>
</comment>
<comment type="cofactor">
    <cofactor evidence="2">
        <name>[2Fe-2S] cluster</name>
        <dbReference type="ChEBI" id="CHEBI:190135"/>
    </cofactor>
    <text evidence="2">Binds 1 [2Fe-2S] cluster per subunit.</text>
</comment>
<comment type="cofactor">
    <cofactor evidence="3">
        <name>Fe cation</name>
        <dbReference type="ChEBI" id="CHEBI:24875"/>
    </cofactor>
    <text evidence="3">Binds 1 Fe cation per subunit.</text>
</comment>
<comment type="activity regulation">
    <text evidence="3">Inhibited by o-phenanthroline.</text>
</comment>
<comment type="biophysicochemical properties">
    <kinetics>
        <KM evidence="3">29 uM for 2-aminobenzenesulfonate</KM>
        <KM evidence="3">18 uM for benzenesulfonate</KM>
        <KM evidence="3">108 uM for 4-toluenesulfonate</KM>
        <Vmax evidence="3">140.0 pmol/sec/mg enzyme with 2-aminobenzenesulfonate as substrate</Vmax>
        <Vmax evidence="3">118.0 pmol/sec/mg enzyme with benzenesulfonate as substrate</Vmax>
        <Vmax evidence="3">72.0 pmol/sec/mg enzyme with 4-toluenesulfonate as substrate</Vmax>
    </kinetics>
    <phDependence>
        <text evidence="3">Optimum pH is 7.5.</text>
    </phDependence>
    <temperatureDependence>
        <text evidence="3">Optimum temperature is 35 degrees Celsius.</text>
    </temperatureDependence>
</comment>
<comment type="subunit">
    <text evidence="3">Heterotetramer with a alpha2beta2 structure.</text>
</comment>
<comment type="induction">
    <text evidence="3 4">Part of the abs operon that is induced during growth with 2-aminobenzenesulfonate (ABS) as carbon source.</text>
</comment>
<comment type="similarity">
    <text evidence="6">Belongs to the bacterial ring-hydroxylating dioxygenase alpha subunit family.</text>
</comment>
<evidence type="ECO:0000250" key="1">
    <source>
        <dbReference type="UniProtKB" id="Q7N4W0"/>
    </source>
</evidence>
<evidence type="ECO:0000255" key="2">
    <source>
        <dbReference type="PROSITE-ProRule" id="PRU00628"/>
    </source>
</evidence>
<evidence type="ECO:0000269" key="3">
    <source>
    </source>
</evidence>
<evidence type="ECO:0000269" key="4">
    <source>
    </source>
</evidence>
<evidence type="ECO:0000303" key="5">
    <source>
    </source>
</evidence>
<evidence type="ECO:0000305" key="6"/>
<evidence type="ECO:0000312" key="7">
    <source>
        <dbReference type="EMBL" id="AAF14227.2"/>
    </source>
</evidence>
<protein>
    <recommendedName>
        <fullName evidence="5">2-aminobenzenesulfonate 2,3-dioxygenase subunit alpha</fullName>
        <ecNumber evidence="3">1.14.12.14</ecNumber>
    </recommendedName>
    <alternativeName>
        <fullName evidence="7">2-aminobenzenesulfonate dioxygenase large subunit</fullName>
    </alternativeName>
    <alternativeName>
        <fullName evidence="7">AbsAa</fullName>
    </alternativeName>
</protein>
<feature type="initiator methionine" description="Removed" evidence="5">
    <location>
        <position position="1"/>
    </location>
</feature>
<feature type="chain" id="PRO_0000430788" description="2-aminobenzenesulfonate 2,3-dioxygenase subunit alpha">
    <location>
        <begin position="2"/>
        <end position="394"/>
    </location>
</feature>
<feature type="domain" description="Rieske" evidence="2">
    <location>
        <begin position="43"/>
        <end position="154"/>
    </location>
</feature>
<feature type="binding site" evidence="2">
    <location>
        <position position="85"/>
    </location>
    <ligand>
        <name>[2Fe-2S] cluster</name>
        <dbReference type="ChEBI" id="CHEBI:190135"/>
    </ligand>
</feature>
<feature type="binding site" evidence="2">
    <location>
        <position position="87"/>
    </location>
    <ligand>
        <name>[2Fe-2S] cluster</name>
        <dbReference type="ChEBI" id="CHEBI:190135"/>
    </ligand>
</feature>
<feature type="binding site" evidence="2">
    <location>
        <position position="105"/>
    </location>
    <ligand>
        <name>[2Fe-2S] cluster</name>
        <dbReference type="ChEBI" id="CHEBI:190135"/>
    </ligand>
</feature>
<feature type="binding site" evidence="2">
    <location>
        <position position="108"/>
    </location>
    <ligand>
        <name>[2Fe-2S] cluster</name>
        <dbReference type="ChEBI" id="CHEBI:190135"/>
    </ligand>
</feature>
<feature type="binding site" evidence="1">
    <location>
        <position position="209"/>
    </location>
    <ligand>
        <name>Fe cation</name>
        <dbReference type="ChEBI" id="CHEBI:24875"/>
    </ligand>
</feature>
<feature type="binding site" evidence="1">
    <location>
        <position position="213"/>
    </location>
    <ligand>
        <name>Fe cation</name>
        <dbReference type="ChEBI" id="CHEBI:24875"/>
    </ligand>
</feature>
<dbReference type="EC" id="1.14.12.14" evidence="3"/>
<dbReference type="EMBL" id="AF109074">
    <property type="protein sequence ID" value="AAF14227.2"/>
    <property type="molecule type" value="Genomic_DNA"/>
</dbReference>
<dbReference type="SMR" id="Q9RBG5"/>
<dbReference type="KEGG" id="ag:AAF14227"/>
<dbReference type="BRENDA" id="1.14.12.14">
    <property type="organism ID" value="10863"/>
</dbReference>
<dbReference type="GO" id="GO:0051537">
    <property type="term" value="F:2 iron, 2 sulfur cluster binding"/>
    <property type="evidence" value="ECO:0007669"/>
    <property type="project" value="UniProtKB-KW"/>
</dbReference>
<dbReference type="GO" id="GO:0018627">
    <property type="term" value="F:2-aminobenzenesulfonate 2,3-dioxygenase activity"/>
    <property type="evidence" value="ECO:0007669"/>
    <property type="project" value="UniProtKB-EC"/>
</dbReference>
<dbReference type="GO" id="GO:0005506">
    <property type="term" value="F:iron ion binding"/>
    <property type="evidence" value="ECO:0007669"/>
    <property type="project" value="InterPro"/>
</dbReference>
<dbReference type="CDD" id="cd00680">
    <property type="entry name" value="RHO_alpha_C"/>
    <property type="match status" value="1"/>
</dbReference>
<dbReference type="CDD" id="cd03469">
    <property type="entry name" value="Rieske_RO_Alpha_N"/>
    <property type="match status" value="1"/>
</dbReference>
<dbReference type="Gene3D" id="3.90.380.10">
    <property type="entry name" value="Naphthalene 1,2-dioxygenase Alpha Subunit, Chain A, domain 1"/>
    <property type="match status" value="1"/>
</dbReference>
<dbReference type="Gene3D" id="2.102.10.10">
    <property type="entry name" value="Rieske [2Fe-2S] iron-sulphur domain"/>
    <property type="match status" value="1"/>
</dbReference>
<dbReference type="InterPro" id="IPR017941">
    <property type="entry name" value="Rieske_2Fe-2S"/>
</dbReference>
<dbReference type="InterPro" id="IPR036922">
    <property type="entry name" value="Rieske_2Fe-2S_sf"/>
</dbReference>
<dbReference type="InterPro" id="IPR015881">
    <property type="entry name" value="Ring-hydroxy_dOase_2Fe2S_BS"/>
</dbReference>
<dbReference type="InterPro" id="IPR015879">
    <property type="entry name" value="Ring_hydroxy_dOase_asu_C_dom"/>
</dbReference>
<dbReference type="InterPro" id="IPR001663">
    <property type="entry name" value="Rng_hydr_dOase-A"/>
</dbReference>
<dbReference type="PANTHER" id="PTHR43756:SF1">
    <property type="entry name" value="3-PHENYLPROPIONATE_CINNAMIC ACID DIOXYGENASE SUBUNIT ALPHA"/>
    <property type="match status" value="1"/>
</dbReference>
<dbReference type="PANTHER" id="PTHR43756">
    <property type="entry name" value="CHOLINE MONOOXYGENASE, CHLOROPLASTIC"/>
    <property type="match status" value="1"/>
</dbReference>
<dbReference type="Pfam" id="PF00355">
    <property type="entry name" value="Rieske"/>
    <property type="match status" value="1"/>
</dbReference>
<dbReference type="Pfam" id="PF00848">
    <property type="entry name" value="Ring_hydroxyl_A"/>
    <property type="match status" value="1"/>
</dbReference>
<dbReference type="PRINTS" id="PR00090">
    <property type="entry name" value="RNGDIOXGNASE"/>
</dbReference>
<dbReference type="SUPFAM" id="SSF55961">
    <property type="entry name" value="Bet v1-like"/>
    <property type="match status" value="1"/>
</dbReference>
<dbReference type="SUPFAM" id="SSF50022">
    <property type="entry name" value="ISP domain"/>
    <property type="match status" value="1"/>
</dbReference>
<dbReference type="PROSITE" id="PS51296">
    <property type="entry name" value="RIESKE"/>
    <property type="match status" value="1"/>
</dbReference>
<dbReference type="PROSITE" id="PS00570">
    <property type="entry name" value="RING_HYDROXYL_ALPHA"/>
    <property type="match status" value="1"/>
</dbReference>
<reference key="1">
    <citation type="journal article" date="1999" name="Microbiology">
        <title>The oxygenase component of the 2-aminobenzenesulfonate dioxygenase system from Alcaligenes sp. strain O-1.</title>
        <authorList>
            <person name="Mampel J."/>
            <person name="Ruff J."/>
            <person name="Junker F."/>
            <person name="Cook A.M."/>
        </authorList>
    </citation>
    <scope>NUCLEOTIDE SEQUENCE [GENOMIC DNA]</scope>
    <scope>PROTEIN SEQUENCE OF 2-14</scope>
    <scope>FUNCTION</scope>
    <scope>CATALYTIC ACTIVITY</scope>
    <scope>BIOPHYSICOCHEMICAL PROPERTIES</scope>
    <scope>SUBUNIT</scope>
    <scope>ACTIVITY REGULATION</scope>
    <scope>INDUCTION</scope>
    <source>
        <strain evidence="7">O-1</strain>
        <plasmid>pSAH</plasmid>
    </source>
</reference>
<reference key="2">
    <citation type="journal article" date="2010" name="Microbiol. Res.">
        <title>Identification of two vicinal operons for the degradation of 2-aminobenzenesulfonate encoded on plasmid pSAH in Alcaligenes sp. strain O-1.</title>
        <authorList>
            <person name="Ruff J."/>
            <person name="Smits T.H."/>
            <person name="Cook A.M."/>
            <person name="Schleheck D."/>
        </authorList>
    </citation>
    <scope>NUCLEOTIDE SEQUENCE [GENOMIC DNA]</scope>
    <source>
        <strain evidence="7">O-1</strain>
        <plasmid>pSAH</plasmid>
    </source>
</reference>
<reference key="3">
    <citation type="journal article" date="1994" name="Microbiology">
        <title>3-Sulphocatechol 2,3-dioxygenase and other dioxygenases (EC 1.13.11.2 and EC 1.14.12.-) in the degradative pathways of 2-aminobenzenesulphonic, benzenesulphonic and 4-toluenesulphonic acids in Alcaligenes sp. strain O-1.</title>
        <authorList>
            <person name="Junker F."/>
            <person name="Leisinger T."/>
            <person name="Cook A.M."/>
        </authorList>
    </citation>
    <scope>FUNCTION</scope>
    <scope>INDUCTION</scope>
</reference>
<reference key="4">
    <citation type="journal article" date="2014" name="PLoS ONE">
        <title>Finding sequences for over 270 orphan enzymes.</title>
        <authorList>
            <person name="Shearer A.G."/>
            <person name="Altman T."/>
            <person name="Rhee C.D."/>
        </authorList>
    </citation>
    <scope>IDENTIFICATION</scope>
</reference>
<name>ABSAA_ALCSP</name>